<keyword id="KW-1185">Reference proteome</keyword>
<keyword id="KW-0949">S-adenosyl-L-methionine</keyword>
<keyword id="KW-0808">Transferase</keyword>
<dbReference type="EC" id="2.1.3.-" evidence="1"/>
<dbReference type="EMBL" id="CP000776">
    <property type="protein sequence ID" value="ABS51741.1"/>
    <property type="molecule type" value="Genomic_DNA"/>
</dbReference>
<dbReference type="RefSeq" id="WP_012108870.1">
    <property type="nucleotide sequence ID" value="NC_009714.1"/>
</dbReference>
<dbReference type="SMR" id="A7I232"/>
<dbReference type="STRING" id="360107.CHAB381_1013"/>
<dbReference type="KEGG" id="cha:CHAB381_1013"/>
<dbReference type="eggNOG" id="COG2890">
    <property type="taxonomic scope" value="Bacteria"/>
</dbReference>
<dbReference type="HOGENOM" id="CLU_078475_0_0_7"/>
<dbReference type="OrthoDB" id="5386938at2"/>
<dbReference type="Proteomes" id="UP000002407">
    <property type="component" value="Chromosome"/>
</dbReference>
<dbReference type="GO" id="GO:0016743">
    <property type="term" value="F:carboxyl- or carbamoyltransferase activity"/>
    <property type="evidence" value="ECO:0007669"/>
    <property type="project" value="UniProtKB-UniRule"/>
</dbReference>
<dbReference type="GO" id="GO:1904047">
    <property type="term" value="F:S-adenosyl-L-methionine binding"/>
    <property type="evidence" value="ECO:0007669"/>
    <property type="project" value="UniProtKB-UniRule"/>
</dbReference>
<dbReference type="GO" id="GO:0002098">
    <property type="term" value="P:tRNA wobble uridine modification"/>
    <property type="evidence" value="ECO:0007669"/>
    <property type="project" value="InterPro"/>
</dbReference>
<dbReference type="CDD" id="cd02440">
    <property type="entry name" value="AdoMet_MTases"/>
    <property type="match status" value="1"/>
</dbReference>
<dbReference type="Gene3D" id="3.40.50.150">
    <property type="entry name" value="Vaccinia Virus protein VP39"/>
    <property type="match status" value="1"/>
</dbReference>
<dbReference type="HAMAP" id="MF_01589">
    <property type="entry name" value="Cx_SAM_synthase"/>
    <property type="match status" value="1"/>
</dbReference>
<dbReference type="InterPro" id="IPR005271">
    <property type="entry name" value="CmoA"/>
</dbReference>
<dbReference type="InterPro" id="IPR041698">
    <property type="entry name" value="Methyltransf_25"/>
</dbReference>
<dbReference type="InterPro" id="IPR029063">
    <property type="entry name" value="SAM-dependent_MTases_sf"/>
</dbReference>
<dbReference type="NCBIfam" id="TIGR00740">
    <property type="entry name" value="carboxy-S-adenosyl-L-methionine synthase CmoA"/>
    <property type="match status" value="1"/>
</dbReference>
<dbReference type="PANTHER" id="PTHR43861:SF2">
    <property type="entry name" value="CARBOXY-S-ADENOSYL-L-METHIONINE SYNTHASE"/>
    <property type="match status" value="1"/>
</dbReference>
<dbReference type="PANTHER" id="PTHR43861">
    <property type="entry name" value="TRANS-ACONITATE 2-METHYLTRANSFERASE-RELATED"/>
    <property type="match status" value="1"/>
</dbReference>
<dbReference type="Pfam" id="PF13649">
    <property type="entry name" value="Methyltransf_25"/>
    <property type="match status" value="1"/>
</dbReference>
<dbReference type="PIRSF" id="PIRSF006325">
    <property type="entry name" value="MeTrfase_bac"/>
    <property type="match status" value="1"/>
</dbReference>
<dbReference type="SUPFAM" id="SSF53335">
    <property type="entry name" value="S-adenosyl-L-methionine-dependent methyltransferases"/>
    <property type="match status" value="1"/>
</dbReference>
<protein>
    <recommendedName>
        <fullName evidence="1">Carboxy-S-adenosyl-L-methionine synthase</fullName>
        <shortName evidence="1">Cx-SAM synthase</shortName>
        <ecNumber evidence="1">2.1.3.-</ecNumber>
    </recommendedName>
</protein>
<gene>
    <name evidence="1" type="primary">cmoA</name>
    <name type="ordered locus">CHAB381_1013</name>
</gene>
<proteinExistence type="inferred from homology"/>
<name>CMOA_CAMHC</name>
<reference key="1">
    <citation type="submission" date="2007-07" db="EMBL/GenBank/DDBJ databases">
        <title>Complete genome sequence of Campylobacter hominis ATCC BAA-381, a commensal isolated from the human gastrointestinal tract.</title>
        <authorList>
            <person name="Fouts D.E."/>
            <person name="Mongodin E.F."/>
            <person name="Puiu D."/>
            <person name="Sebastian Y."/>
            <person name="Miller W.G."/>
            <person name="Mandrell R.E."/>
            <person name="Nelson K.E."/>
        </authorList>
    </citation>
    <scope>NUCLEOTIDE SEQUENCE [LARGE SCALE GENOMIC DNA]</scope>
    <source>
        <strain>ATCC BAA-381 / DSM 21671 / CCUG 45161 / LMG 19568 / NCTC 13146 / CH001A</strain>
    </source>
</reference>
<sequence>MKDEIFKNEIKKQFEFDENVASVFDDMISRSVPYYRESCELSGEILARSLKEKAKIIDLGCSTAEFLIALHHKRPDFELFGVDNSESMLKIAKRKSMAHGAKIDFKNEDILNCDLKGFDCAILNYTLQFIRPIKRSDFVAKIYSNLANNGILIMAEKLIYDDKTLAAQMIEIYENYKQKQGYSAFEIAQKRKALENILIPFSETENRQMLKNAGFKIVEVIFKWANFAVFLAKK</sequence>
<organism>
    <name type="scientific">Campylobacter hominis (strain ATCC BAA-381 / DSM 21671 / CCUG 45161 / LMG 19568 / NCTC 13146 / CH001A)</name>
    <dbReference type="NCBI Taxonomy" id="360107"/>
    <lineage>
        <taxon>Bacteria</taxon>
        <taxon>Pseudomonadati</taxon>
        <taxon>Campylobacterota</taxon>
        <taxon>Epsilonproteobacteria</taxon>
        <taxon>Campylobacterales</taxon>
        <taxon>Campylobacteraceae</taxon>
        <taxon>Campylobacter</taxon>
    </lineage>
</organism>
<feature type="chain" id="PRO_0000314313" description="Carboxy-S-adenosyl-L-methionine synthase">
    <location>
        <begin position="1"/>
        <end position="234"/>
    </location>
</feature>
<feature type="binding site" evidence="1">
    <location>
        <position position="35"/>
    </location>
    <ligand>
        <name>S-adenosyl-L-methionine</name>
        <dbReference type="ChEBI" id="CHEBI:59789"/>
    </ligand>
</feature>
<feature type="binding site" evidence="1">
    <location>
        <begin position="60"/>
        <end position="62"/>
    </location>
    <ligand>
        <name>S-adenosyl-L-methionine</name>
        <dbReference type="ChEBI" id="CHEBI:59789"/>
    </ligand>
</feature>
<feature type="binding site" evidence="1">
    <location>
        <begin position="83"/>
        <end position="84"/>
    </location>
    <ligand>
        <name>S-adenosyl-L-methionine</name>
        <dbReference type="ChEBI" id="CHEBI:59789"/>
    </ligand>
</feature>
<feature type="binding site" evidence="1">
    <location>
        <begin position="109"/>
        <end position="110"/>
    </location>
    <ligand>
        <name>S-adenosyl-L-methionine</name>
        <dbReference type="ChEBI" id="CHEBI:59789"/>
    </ligand>
</feature>
<feature type="binding site" evidence="1">
    <location>
        <position position="124"/>
    </location>
    <ligand>
        <name>S-adenosyl-L-methionine</name>
        <dbReference type="ChEBI" id="CHEBI:59789"/>
    </ligand>
</feature>
<feature type="binding site" evidence="1">
    <location>
        <position position="191"/>
    </location>
    <ligand>
        <name>S-adenosyl-L-methionine</name>
        <dbReference type="ChEBI" id="CHEBI:59789"/>
    </ligand>
</feature>
<accession>A7I232</accession>
<evidence type="ECO:0000255" key="1">
    <source>
        <dbReference type="HAMAP-Rule" id="MF_01589"/>
    </source>
</evidence>
<comment type="function">
    <text evidence="1">Catalyzes the conversion of S-adenosyl-L-methionine (SAM) to carboxy-S-adenosyl-L-methionine (Cx-SAM).</text>
</comment>
<comment type="catalytic activity">
    <reaction evidence="1">
        <text>prephenate + S-adenosyl-L-methionine = carboxy-S-adenosyl-L-methionine + 3-phenylpyruvate + H2O</text>
        <dbReference type="Rhea" id="RHEA:51692"/>
        <dbReference type="ChEBI" id="CHEBI:15377"/>
        <dbReference type="ChEBI" id="CHEBI:18005"/>
        <dbReference type="ChEBI" id="CHEBI:29934"/>
        <dbReference type="ChEBI" id="CHEBI:59789"/>
        <dbReference type="ChEBI" id="CHEBI:134278"/>
    </reaction>
</comment>
<comment type="subunit">
    <text evidence="1">Homodimer.</text>
</comment>
<comment type="similarity">
    <text evidence="1">Belongs to the class I-like SAM-binding methyltransferase superfamily. Cx-SAM synthase family.</text>
</comment>